<reference key="1">
    <citation type="submission" date="2007-08" db="EMBL/GenBank/DDBJ databases">
        <title>Complete sequence of Roseiflexus castenholzii DSM 13941.</title>
        <authorList>
            <consortium name="US DOE Joint Genome Institute"/>
            <person name="Copeland A."/>
            <person name="Lucas S."/>
            <person name="Lapidus A."/>
            <person name="Barry K."/>
            <person name="Glavina del Rio T."/>
            <person name="Dalin E."/>
            <person name="Tice H."/>
            <person name="Pitluck S."/>
            <person name="Thompson L.S."/>
            <person name="Brettin T."/>
            <person name="Bruce D."/>
            <person name="Detter J.C."/>
            <person name="Han C."/>
            <person name="Tapia R."/>
            <person name="Schmutz J."/>
            <person name="Larimer F."/>
            <person name="Land M."/>
            <person name="Hauser L."/>
            <person name="Kyrpides N."/>
            <person name="Mikhailova N."/>
            <person name="Bryant D.A."/>
            <person name="Hanada S."/>
            <person name="Tsukatani Y."/>
            <person name="Richardson P."/>
        </authorList>
    </citation>
    <scope>NUCLEOTIDE SEQUENCE [LARGE SCALE GENOMIC DNA]</scope>
    <source>
        <strain>DSM 13941 / HLO8</strain>
    </source>
</reference>
<dbReference type="EC" id="6.3.2.1" evidence="1"/>
<dbReference type="EMBL" id="CP000804">
    <property type="protein sequence ID" value="ABU56465.1"/>
    <property type="molecule type" value="Genomic_DNA"/>
</dbReference>
<dbReference type="RefSeq" id="WP_011997869.1">
    <property type="nucleotide sequence ID" value="NC_009767.1"/>
</dbReference>
<dbReference type="SMR" id="A7NG78"/>
<dbReference type="STRING" id="383372.Rcas_0333"/>
<dbReference type="KEGG" id="rca:Rcas_0333"/>
<dbReference type="eggNOG" id="COG0414">
    <property type="taxonomic scope" value="Bacteria"/>
</dbReference>
<dbReference type="HOGENOM" id="CLU_047148_0_0_0"/>
<dbReference type="OrthoDB" id="9773087at2"/>
<dbReference type="UniPathway" id="UPA00028">
    <property type="reaction ID" value="UER00005"/>
</dbReference>
<dbReference type="Proteomes" id="UP000000263">
    <property type="component" value="Chromosome"/>
</dbReference>
<dbReference type="GO" id="GO:0005829">
    <property type="term" value="C:cytosol"/>
    <property type="evidence" value="ECO:0007669"/>
    <property type="project" value="TreeGrafter"/>
</dbReference>
<dbReference type="GO" id="GO:0005524">
    <property type="term" value="F:ATP binding"/>
    <property type="evidence" value="ECO:0007669"/>
    <property type="project" value="UniProtKB-KW"/>
</dbReference>
<dbReference type="GO" id="GO:0004592">
    <property type="term" value="F:pantoate-beta-alanine ligase activity"/>
    <property type="evidence" value="ECO:0007669"/>
    <property type="project" value="UniProtKB-UniRule"/>
</dbReference>
<dbReference type="GO" id="GO:0015940">
    <property type="term" value="P:pantothenate biosynthetic process"/>
    <property type="evidence" value="ECO:0007669"/>
    <property type="project" value="UniProtKB-UniRule"/>
</dbReference>
<dbReference type="CDD" id="cd00560">
    <property type="entry name" value="PanC"/>
    <property type="match status" value="1"/>
</dbReference>
<dbReference type="FunFam" id="3.30.1300.10:FF:000001">
    <property type="entry name" value="Pantothenate synthetase"/>
    <property type="match status" value="1"/>
</dbReference>
<dbReference type="FunFam" id="3.40.50.620:FF:000013">
    <property type="entry name" value="Pantothenate synthetase"/>
    <property type="match status" value="1"/>
</dbReference>
<dbReference type="Gene3D" id="3.40.50.620">
    <property type="entry name" value="HUPs"/>
    <property type="match status" value="1"/>
</dbReference>
<dbReference type="Gene3D" id="3.30.1300.10">
    <property type="entry name" value="Pantoate-beta-alanine ligase, C-terminal domain"/>
    <property type="match status" value="1"/>
</dbReference>
<dbReference type="HAMAP" id="MF_00158">
    <property type="entry name" value="PanC"/>
    <property type="match status" value="1"/>
</dbReference>
<dbReference type="InterPro" id="IPR004821">
    <property type="entry name" value="Cyt_trans-like"/>
</dbReference>
<dbReference type="InterPro" id="IPR003721">
    <property type="entry name" value="Pantoate_ligase"/>
</dbReference>
<dbReference type="InterPro" id="IPR042176">
    <property type="entry name" value="Pantoate_ligase_C"/>
</dbReference>
<dbReference type="InterPro" id="IPR014729">
    <property type="entry name" value="Rossmann-like_a/b/a_fold"/>
</dbReference>
<dbReference type="NCBIfam" id="TIGR00125">
    <property type="entry name" value="cyt_tran_rel"/>
    <property type="match status" value="1"/>
</dbReference>
<dbReference type="NCBIfam" id="TIGR00018">
    <property type="entry name" value="panC"/>
    <property type="match status" value="1"/>
</dbReference>
<dbReference type="PANTHER" id="PTHR21299">
    <property type="entry name" value="CYTIDYLATE KINASE/PANTOATE-BETA-ALANINE LIGASE"/>
    <property type="match status" value="1"/>
</dbReference>
<dbReference type="PANTHER" id="PTHR21299:SF1">
    <property type="entry name" value="PANTOATE--BETA-ALANINE LIGASE"/>
    <property type="match status" value="1"/>
</dbReference>
<dbReference type="Pfam" id="PF02569">
    <property type="entry name" value="Pantoate_ligase"/>
    <property type="match status" value="1"/>
</dbReference>
<dbReference type="SUPFAM" id="SSF52374">
    <property type="entry name" value="Nucleotidylyl transferase"/>
    <property type="match status" value="1"/>
</dbReference>
<organism>
    <name type="scientific">Roseiflexus castenholzii (strain DSM 13941 / HLO8)</name>
    <dbReference type="NCBI Taxonomy" id="383372"/>
    <lineage>
        <taxon>Bacteria</taxon>
        <taxon>Bacillati</taxon>
        <taxon>Chloroflexota</taxon>
        <taxon>Chloroflexia</taxon>
        <taxon>Chloroflexales</taxon>
        <taxon>Roseiflexineae</taxon>
        <taxon>Roseiflexaceae</taxon>
        <taxon>Roseiflexus</taxon>
    </lineage>
</organism>
<proteinExistence type="inferred from homology"/>
<sequence>MRVIATIGEFRAARAAMHGAVGLVPTMGYLHEGHLSLVRRARAENDHVIVTIFVNPTQFGPSEDLSRYPRDLPRDLALLEAEKIDVVFAPNVAEMYPPGFGTFVDVGPIAAPLEGAARPGHFRGVATVVCKLFNITTPHRAYFGQKDAQQTLVIRRMTLDLNLPVEIIVCPIVREPDGLAMSSRNVYLNPKERRAATVLFRALQAVQERFRAGERNGDALRAAMRAVIDAEPLAHPDYVSIADLDDLHELDRVTSRALASLAVRIGTTRLIDNCILEA</sequence>
<accession>A7NG78</accession>
<protein>
    <recommendedName>
        <fullName evidence="1">Pantothenate synthetase</fullName>
        <shortName evidence="1">PS</shortName>
        <ecNumber evidence="1">6.3.2.1</ecNumber>
    </recommendedName>
    <alternativeName>
        <fullName evidence="1">Pantoate--beta-alanine ligase</fullName>
    </alternativeName>
    <alternativeName>
        <fullName evidence="1">Pantoate-activating enzyme</fullName>
    </alternativeName>
</protein>
<feature type="chain" id="PRO_1000076862" description="Pantothenate synthetase">
    <location>
        <begin position="1"/>
        <end position="278"/>
    </location>
</feature>
<feature type="active site" description="Proton donor" evidence="1">
    <location>
        <position position="34"/>
    </location>
</feature>
<feature type="binding site" evidence="1">
    <location>
        <begin position="27"/>
        <end position="34"/>
    </location>
    <ligand>
        <name>ATP</name>
        <dbReference type="ChEBI" id="CHEBI:30616"/>
    </ligand>
</feature>
<feature type="binding site" evidence="1">
    <location>
        <position position="58"/>
    </location>
    <ligand>
        <name>(R)-pantoate</name>
        <dbReference type="ChEBI" id="CHEBI:15980"/>
    </ligand>
</feature>
<feature type="binding site" evidence="1">
    <location>
        <position position="58"/>
    </location>
    <ligand>
        <name>beta-alanine</name>
        <dbReference type="ChEBI" id="CHEBI:57966"/>
    </ligand>
</feature>
<feature type="binding site" evidence="1">
    <location>
        <begin position="144"/>
        <end position="147"/>
    </location>
    <ligand>
        <name>ATP</name>
        <dbReference type="ChEBI" id="CHEBI:30616"/>
    </ligand>
</feature>
<feature type="binding site" evidence="1">
    <location>
        <position position="150"/>
    </location>
    <ligand>
        <name>(R)-pantoate</name>
        <dbReference type="ChEBI" id="CHEBI:15980"/>
    </ligand>
</feature>
<feature type="binding site" evidence="1">
    <location>
        <position position="173"/>
    </location>
    <ligand>
        <name>ATP</name>
        <dbReference type="ChEBI" id="CHEBI:30616"/>
    </ligand>
</feature>
<feature type="binding site" evidence="1">
    <location>
        <begin position="181"/>
        <end position="184"/>
    </location>
    <ligand>
        <name>ATP</name>
        <dbReference type="ChEBI" id="CHEBI:30616"/>
    </ligand>
</feature>
<evidence type="ECO:0000255" key="1">
    <source>
        <dbReference type="HAMAP-Rule" id="MF_00158"/>
    </source>
</evidence>
<gene>
    <name evidence="1" type="primary">panC</name>
    <name type="ordered locus">Rcas_0333</name>
</gene>
<keyword id="KW-0067">ATP-binding</keyword>
<keyword id="KW-0963">Cytoplasm</keyword>
<keyword id="KW-0436">Ligase</keyword>
<keyword id="KW-0547">Nucleotide-binding</keyword>
<keyword id="KW-0566">Pantothenate biosynthesis</keyword>
<keyword id="KW-1185">Reference proteome</keyword>
<comment type="function">
    <text evidence="1">Catalyzes the condensation of pantoate with beta-alanine in an ATP-dependent reaction via a pantoyl-adenylate intermediate.</text>
</comment>
<comment type="catalytic activity">
    <reaction evidence="1">
        <text>(R)-pantoate + beta-alanine + ATP = (R)-pantothenate + AMP + diphosphate + H(+)</text>
        <dbReference type="Rhea" id="RHEA:10912"/>
        <dbReference type="ChEBI" id="CHEBI:15378"/>
        <dbReference type="ChEBI" id="CHEBI:15980"/>
        <dbReference type="ChEBI" id="CHEBI:29032"/>
        <dbReference type="ChEBI" id="CHEBI:30616"/>
        <dbReference type="ChEBI" id="CHEBI:33019"/>
        <dbReference type="ChEBI" id="CHEBI:57966"/>
        <dbReference type="ChEBI" id="CHEBI:456215"/>
        <dbReference type="EC" id="6.3.2.1"/>
    </reaction>
</comment>
<comment type="pathway">
    <text evidence="1">Cofactor biosynthesis; (R)-pantothenate biosynthesis; (R)-pantothenate from (R)-pantoate and beta-alanine: step 1/1.</text>
</comment>
<comment type="subunit">
    <text evidence="1">Homodimer.</text>
</comment>
<comment type="subcellular location">
    <subcellularLocation>
        <location evidence="1">Cytoplasm</location>
    </subcellularLocation>
</comment>
<comment type="miscellaneous">
    <text evidence="1">The reaction proceeds by a bi uni uni bi ping pong mechanism.</text>
</comment>
<comment type="similarity">
    <text evidence="1">Belongs to the pantothenate synthetase family.</text>
</comment>
<name>PANC_ROSCS</name>